<proteinExistence type="evidence at protein level"/>
<sequence>AYAQWVIIII</sequence>
<keyword id="KW-0204">Cytolysis</keyword>
<keyword id="KW-0903">Direct protein sequencing</keyword>
<keyword id="KW-0354">Hemolysis</keyword>
<dbReference type="GO" id="GO:0031640">
    <property type="term" value="P:killing of cells of another organism"/>
    <property type="evidence" value="ECO:0007669"/>
    <property type="project" value="UniProtKB-KW"/>
</dbReference>
<organism>
    <name type="scientific">Cyclocybe aegerita</name>
    <name type="common">Black poplar mushroom</name>
    <name type="synonym">Agrocybe aegerita</name>
    <dbReference type="NCBI Taxonomy" id="1973307"/>
    <lineage>
        <taxon>Eukaryota</taxon>
        <taxon>Fungi</taxon>
        <taxon>Dikarya</taxon>
        <taxon>Basidiomycota</taxon>
        <taxon>Agaricomycotina</taxon>
        <taxon>Agaricomycetes</taxon>
        <taxon>Agaricomycetidae</taxon>
        <taxon>Agaricales</taxon>
        <taxon>Agaricineae</taxon>
        <taxon>Bolbitiaceae</taxon>
        <taxon>Cyclocybe</taxon>
    </lineage>
</organism>
<accession>P83465</accession>
<feature type="chain" id="PRO_0000156987" description="Aegerolysin">
    <location>
        <begin position="1"/>
        <end position="10" status="greater than"/>
    </location>
</feature>
<feature type="non-terminal residue">
    <location>
        <position position="10"/>
    </location>
</feature>
<protein>
    <recommendedName>
        <fullName>Aegerolysin</fullName>
    </recommendedName>
</protein>
<comment type="function">
    <text evidence="1">Has hemolytic activity against bovine erythrocytes at nanomolar concentrations. May play an important role in the initial phase of fungal fruiting.</text>
</comment>
<comment type="subunit">
    <text evidence="1">Monomer.</text>
</comment>
<comment type="similarity">
    <text evidence="2">Belongs to the aegerolysin family.</text>
</comment>
<name>AEGL_CYCAE</name>
<evidence type="ECO:0000269" key="1">
    <source>
    </source>
</evidence>
<evidence type="ECO:0000305" key="2"/>
<reference key="1">
    <citation type="journal article" date="2002" name="Biochim. Biophys. Acta">
        <title>Pleurotus and Agrocybe hemolysins, new proteins hypothetically involved in fungal fruiting.</title>
        <authorList>
            <person name="Berne S."/>
            <person name="Krizaj I."/>
            <person name="Pohleven F."/>
            <person name="Turk T."/>
            <person name="Macek P."/>
            <person name="Sepcic K."/>
        </authorList>
    </citation>
    <scope>PROTEIN SEQUENCE</scope>
    <scope>FUNCTION</scope>
    <scope>SUBUNIT</scope>
    <source>
        <strain>PAP2 98</strain>
        <tissue>Fruiting body</tissue>
    </source>
</reference>